<keyword id="KW-0521">NADP</keyword>
<keyword id="KW-0560">Oxidoreductase</keyword>
<keyword id="KW-1185">Reference proteome</keyword>
<organism>
    <name type="scientific">Schizosaccharomyces pombe (strain 972 / ATCC 24843)</name>
    <name type="common">Fission yeast</name>
    <dbReference type="NCBI Taxonomy" id="284812"/>
    <lineage>
        <taxon>Eukaryota</taxon>
        <taxon>Fungi</taxon>
        <taxon>Dikarya</taxon>
        <taxon>Ascomycota</taxon>
        <taxon>Taphrinomycotina</taxon>
        <taxon>Schizosaccharomycetes</taxon>
        <taxon>Schizosaccharomycetales</taxon>
        <taxon>Schizosaccharomycetaceae</taxon>
        <taxon>Schizosaccharomyces</taxon>
    </lineage>
</organism>
<name>YJCD_SCHPO</name>
<evidence type="ECO:0000250" key="1">
    <source>
        <dbReference type="UniProtKB" id="L0E2Z4"/>
    </source>
</evidence>
<evidence type="ECO:0000250" key="2">
    <source>
        <dbReference type="UniProtKB" id="O93868"/>
    </source>
</evidence>
<evidence type="ECO:0000305" key="3"/>
<gene>
    <name type="ORF">SPCC736.13</name>
</gene>
<comment type="similarity">
    <text evidence="3">Belongs to the short-chain dehydrogenases/reductases (SDR) family.</text>
</comment>
<accession>O74959</accession>
<protein>
    <recommendedName>
        <fullName>Uncharacterized oxidoreductase C736.13</fullName>
        <ecNumber>1.-.-.-</ecNumber>
    </recommendedName>
</protein>
<proteinExistence type="inferred from homology"/>
<feature type="chain" id="PRO_0000374031" description="Uncharacterized oxidoreductase C736.13">
    <location>
        <begin position="1"/>
        <end position="339"/>
    </location>
</feature>
<feature type="active site" description="Proton donor" evidence="2">
    <location>
        <position position="213"/>
    </location>
</feature>
<feature type="active site" description="Lowers pKa of active site Tyr" evidence="2">
    <location>
        <position position="217"/>
    </location>
</feature>
<feature type="binding site" evidence="1">
    <location>
        <position position="54"/>
    </location>
    <ligand>
        <name>NADP(+)</name>
        <dbReference type="ChEBI" id="CHEBI:58349"/>
    </ligand>
</feature>
<feature type="binding site" evidence="1">
    <location>
        <position position="78"/>
    </location>
    <ligand>
        <name>NADP(+)</name>
        <dbReference type="ChEBI" id="CHEBI:58349"/>
    </ligand>
</feature>
<feature type="binding site" evidence="1">
    <location>
        <position position="101"/>
    </location>
    <ligand>
        <name>NADP(+)</name>
        <dbReference type="ChEBI" id="CHEBI:58349"/>
    </ligand>
</feature>
<feature type="binding site" evidence="2">
    <location>
        <position position="128"/>
    </location>
    <ligand>
        <name>NADP(+)</name>
        <dbReference type="ChEBI" id="CHEBI:58349"/>
    </ligand>
</feature>
<feature type="binding site" evidence="2">
    <location>
        <position position="213"/>
    </location>
    <ligand>
        <name>NADP(+)</name>
        <dbReference type="ChEBI" id="CHEBI:58349"/>
    </ligand>
</feature>
<feature type="binding site" evidence="2">
    <location>
        <position position="217"/>
    </location>
    <ligand>
        <name>NADP(+)</name>
        <dbReference type="ChEBI" id="CHEBI:58349"/>
    </ligand>
</feature>
<reference key="1">
    <citation type="journal article" date="2002" name="Nature">
        <title>The genome sequence of Schizosaccharomyces pombe.</title>
        <authorList>
            <person name="Wood V."/>
            <person name="Gwilliam R."/>
            <person name="Rajandream M.A."/>
            <person name="Lyne M.H."/>
            <person name="Lyne R."/>
            <person name="Stewart A."/>
            <person name="Sgouros J.G."/>
            <person name="Peat N."/>
            <person name="Hayles J."/>
            <person name="Baker S.G."/>
            <person name="Basham D."/>
            <person name="Bowman S."/>
            <person name="Brooks K."/>
            <person name="Brown D."/>
            <person name="Brown S."/>
            <person name="Chillingworth T."/>
            <person name="Churcher C.M."/>
            <person name="Collins M."/>
            <person name="Connor R."/>
            <person name="Cronin A."/>
            <person name="Davis P."/>
            <person name="Feltwell T."/>
            <person name="Fraser A."/>
            <person name="Gentles S."/>
            <person name="Goble A."/>
            <person name="Hamlin N."/>
            <person name="Harris D.E."/>
            <person name="Hidalgo J."/>
            <person name="Hodgson G."/>
            <person name="Holroyd S."/>
            <person name="Hornsby T."/>
            <person name="Howarth S."/>
            <person name="Huckle E.J."/>
            <person name="Hunt S."/>
            <person name="Jagels K."/>
            <person name="James K.D."/>
            <person name="Jones L."/>
            <person name="Jones M."/>
            <person name="Leather S."/>
            <person name="McDonald S."/>
            <person name="McLean J."/>
            <person name="Mooney P."/>
            <person name="Moule S."/>
            <person name="Mungall K.L."/>
            <person name="Murphy L.D."/>
            <person name="Niblett D."/>
            <person name="Odell C."/>
            <person name="Oliver K."/>
            <person name="O'Neil S."/>
            <person name="Pearson D."/>
            <person name="Quail M.A."/>
            <person name="Rabbinowitsch E."/>
            <person name="Rutherford K.M."/>
            <person name="Rutter S."/>
            <person name="Saunders D."/>
            <person name="Seeger K."/>
            <person name="Sharp S."/>
            <person name="Skelton J."/>
            <person name="Simmonds M.N."/>
            <person name="Squares R."/>
            <person name="Squares S."/>
            <person name="Stevens K."/>
            <person name="Taylor K."/>
            <person name="Taylor R.G."/>
            <person name="Tivey A."/>
            <person name="Walsh S.V."/>
            <person name="Warren T."/>
            <person name="Whitehead S."/>
            <person name="Woodward J.R."/>
            <person name="Volckaert G."/>
            <person name="Aert R."/>
            <person name="Robben J."/>
            <person name="Grymonprez B."/>
            <person name="Weltjens I."/>
            <person name="Vanstreels E."/>
            <person name="Rieger M."/>
            <person name="Schaefer M."/>
            <person name="Mueller-Auer S."/>
            <person name="Gabel C."/>
            <person name="Fuchs M."/>
            <person name="Duesterhoeft A."/>
            <person name="Fritzc C."/>
            <person name="Holzer E."/>
            <person name="Moestl D."/>
            <person name="Hilbert H."/>
            <person name="Borzym K."/>
            <person name="Langer I."/>
            <person name="Beck A."/>
            <person name="Lehrach H."/>
            <person name="Reinhardt R."/>
            <person name="Pohl T.M."/>
            <person name="Eger P."/>
            <person name="Zimmermann W."/>
            <person name="Wedler H."/>
            <person name="Wambutt R."/>
            <person name="Purnelle B."/>
            <person name="Goffeau A."/>
            <person name="Cadieu E."/>
            <person name="Dreano S."/>
            <person name="Gloux S."/>
            <person name="Lelaure V."/>
            <person name="Mottier S."/>
            <person name="Galibert F."/>
            <person name="Aves S.J."/>
            <person name="Xiang Z."/>
            <person name="Hunt C."/>
            <person name="Moore K."/>
            <person name="Hurst S.M."/>
            <person name="Lucas M."/>
            <person name="Rochet M."/>
            <person name="Gaillardin C."/>
            <person name="Tallada V.A."/>
            <person name="Garzon A."/>
            <person name="Thode G."/>
            <person name="Daga R.R."/>
            <person name="Cruzado L."/>
            <person name="Jimenez J."/>
            <person name="Sanchez M."/>
            <person name="del Rey F."/>
            <person name="Benito J."/>
            <person name="Dominguez A."/>
            <person name="Revuelta J.L."/>
            <person name="Moreno S."/>
            <person name="Armstrong J."/>
            <person name="Forsburg S.L."/>
            <person name="Cerutti L."/>
            <person name="Lowe T."/>
            <person name="McCombie W.R."/>
            <person name="Paulsen I."/>
            <person name="Potashkin J."/>
            <person name="Shpakovski G.V."/>
            <person name="Ussery D."/>
            <person name="Barrell B.G."/>
            <person name="Nurse P."/>
        </authorList>
    </citation>
    <scope>NUCLEOTIDE SEQUENCE [LARGE SCALE GENOMIC DNA]</scope>
    <source>
        <strain>972 / ATCC 24843</strain>
    </source>
</reference>
<sequence>MSYSFQGLLNRVNESAIVNTLKEYTGLNTPKWTFNDIPDLTGKVALVTGSSGGIGYVTALELARKGAKVYLAGRNEEKYQKVMKQIHDEVRHSKIRFLRLDLLDFESVYQAAESFIAKEEKLHILVNNAGIMNPPFELTKDGYELQIQTNYLSHYLFTELLLPTLRRTAEECRPGDVRIVHVASIAYLQAPYSGIYFPDLNLPHVLLGTFARYGQSKYAQILYSIALAKRLEKYGIYSVSLHPGVIRTELTRYSPTFALKLLEKSVFQYLLLDPIRGAMTSLYAATSPEISKEHLNGAYFTAIAQRGILHRAHDDAFVEELYRYTHKIFEDLKYLAPSP</sequence>
<dbReference type="EC" id="1.-.-.-"/>
<dbReference type="EMBL" id="CU329672">
    <property type="protein sequence ID" value="CAA19277.1"/>
    <property type="molecule type" value="Genomic_DNA"/>
</dbReference>
<dbReference type="PIR" id="T41570">
    <property type="entry name" value="T41570"/>
</dbReference>
<dbReference type="RefSeq" id="NP_587784.1">
    <property type="nucleotide sequence ID" value="NM_001022777.2"/>
</dbReference>
<dbReference type="SMR" id="O74959"/>
<dbReference type="BioGRID" id="276126">
    <property type="interactions" value="11"/>
</dbReference>
<dbReference type="FunCoup" id="O74959">
    <property type="interactions" value="180"/>
</dbReference>
<dbReference type="STRING" id="284812.O74959"/>
<dbReference type="iPTMnet" id="O74959"/>
<dbReference type="PaxDb" id="4896-SPCC736.13.1"/>
<dbReference type="EnsemblFungi" id="SPCC736.13.1">
    <property type="protein sequence ID" value="SPCC736.13.1:pep"/>
    <property type="gene ID" value="SPCC736.13"/>
</dbReference>
<dbReference type="KEGG" id="spo:2539566"/>
<dbReference type="PomBase" id="SPCC736.13"/>
<dbReference type="VEuPathDB" id="FungiDB:SPCC736.13"/>
<dbReference type="eggNOG" id="KOG1208">
    <property type="taxonomic scope" value="Eukaryota"/>
</dbReference>
<dbReference type="HOGENOM" id="CLU_010194_44_6_1"/>
<dbReference type="InParanoid" id="O74959"/>
<dbReference type="OMA" id="FTWFRYA"/>
<dbReference type="PhylomeDB" id="O74959"/>
<dbReference type="Reactome" id="R-SPO-5365859">
    <property type="pathway name" value="RA biosynthesis pathway"/>
</dbReference>
<dbReference type="PRO" id="PR:O74959"/>
<dbReference type="Proteomes" id="UP000002485">
    <property type="component" value="Chromosome III"/>
</dbReference>
<dbReference type="GO" id="GO:0016491">
    <property type="term" value="F:oxidoreductase activity"/>
    <property type="evidence" value="ECO:0000255"/>
    <property type="project" value="PomBase"/>
</dbReference>
<dbReference type="CDD" id="cd05327">
    <property type="entry name" value="retinol-DH_like_SDR_c_like"/>
    <property type="match status" value="1"/>
</dbReference>
<dbReference type="Gene3D" id="3.40.50.720">
    <property type="entry name" value="NAD(P)-binding Rossmann-like Domain"/>
    <property type="match status" value="1"/>
</dbReference>
<dbReference type="InterPro" id="IPR036291">
    <property type="entry name" value="NAD(P)-bd_dom_sf"/>
</dbReference>
<dbReference type="InterPro" id="IPR002347">
    <property type="entry name" value="SDR_fam"/>
</dbReference>
<dbReference type="PANTHER" id="PTHR24320">
    <property type="entry name" value="RETINOL DEHYDROGENASE"/>
    <property type="match status" value="1"/>
</dbReference>
<dbReference type="PANTHER" id="PTHR24320:SF282">
    <property type="entry name" value="WW DOMAIN-CONTAINING OXIDOREDUCTASE"/>
    <property type="match status" value="1"/>
</dbReference>
<dbReference type="Pfam" id="PF00106">
    <property type="entry name" value="adh_short"/>
    <property type="match status" value="1"/>
</dbReference>
<dbReference type="PRINTS" id="PR00081">
    <property type="entry name" value="GDHRDH"/>
</dbReference>
<dbReference type="SUPFAM" id="SSF51735">
    <property type="entry name" value="NAD(P)-binding Rossmann-fold domains"/>
    <property type="match status" value="1"/>
</dbReference>